<dbReference type="EC" id="1.3.1.83"/>
<dbReference type="EMBL" id="X97972">
    <property type="protein sequence ID" value="CAA66615.1"/>
    <property type="molecule type" value="Genomic_DNA"/>
</dbReference>
<dbReference type="EMBL" id="BA000022">
    <property type="protein sequence ID" value="BAA18339.1"/>
    <property type="status" value="ALT_INIT"/>
    <property type="molecule type" value="Genomic_DNA"/>
</dbReference>
<dbReference type="PIR" id="S69286">
    <property type="entry name" value="S69286"/>
</dbReference>
<dbReference type="SMR" id="Q55087"/>
<dbReference type="STRING" id="1148.gene:10499215"/>
<dbReference type="PaxDb" id="1148-1653425"/>
<dbReference type="EnsemblBacteria" id="BAA18339">
    <property type="protein sequence ID" value="BAA18339"/>
    <property type="gene ID" value="BAA18339"/>
</dbReference>
<dbReference type="KEGG" id="syn:sll1091"/>
<dbReference type="eggNOG" id="COG0644">
    <property type="taxonomic scope" value="Bacteria"/>
</dbReference>
<dbReference type="InParanoid" id="Q55087"/>
<dbReference type="PhylomeDB" id="Q55087"/>
<dbReference type="BRENDA" id="1.3.1.111">
    <property type="organism ID" value="382"/>
</dbReference>
<dbReference type="BRENDA" id="1.3.1.83">
    <property type="organism ID" value="382"/>
</dbReference>
<dbReference type="UniPathway" id="UPA00668"/>
<dbReference type="Proteomes" id="UP000001425">
    <property type="component" value="Chromosome"/>
</dbReference>
<dbReference type="GO" id="GO:0071949">
    <property type="term" value="F:FAD binding"/>
    <property type="evidence" value="ECO:0007669"/>
    <property type="project" value="InterPro"/>
</dbReference>
<dbReference type="GO" id="GO:0102067">
    <property type="term" value="F:geranylgeranyl diphosphate reductase activity"/>
    <property type="evidence" value="ECO:0007669"/>
    <property type="project" value="UniProtKB-EC"/>
</dbReference>
<dbReference type="GO" id="GO:0045550">
    <property type="term" value="F:geranylgeranyl reductase activity"/>
    <property type="evidence" value="ECO:0007669"/>
    <property type="project" value="InterPro"/>
</dbReference>
<dbReference type="GO" id="GO:0004497">
    <property type="term" value="F:monooxygenase activity"/>
    <property type="evidence" value="ECO:0000318"/>
    <property type="project" value="GO_Central"/>
</dbReference>
<dbReference type="GO" id="GO:0015995">
    <property type="term" value="P:chlorophyll biosynthetic process"/>
    <property type="evidence" value="ECO:0007669"/>
    <property type="project" value="UniProtKB-UniPathway"/>
</dbReference>
<dbReference type="GO" id="GO:0015979">
    <property type="term" value="P:photosynthesis"/>
    <property type="evidence" value="ECO:0007669"/>
    <property type="project" value="UniProtKB-KW"/>
</dbReference>
<dbReference type="FunFam" id="3.50.50.60:FF:000083">
    <property type="entry name" value="Geranylgeranyl diphosphate reductase"/>
    <property type="match status" value="1"/>
</dbReference>
<dbReference type="Gene3D" id="3.50.50.60">
    <property type="entry name" value="FAD/NAD(P)-binding domain"/>
    <property type="match status" value="1"/>
</dbReference>
<dbReference type="InterPro" id="IPR010253">
    <property type="entry name" value="BchP_ChlP_pln/prok"/>
</dbReference>
<dbReference type="InterPro" id="IPR002938">
    <property type="entry name" value="FAD-bd"/>
</dbReference>
<dbReference type="InterPro" id="IPR036188">
    <property type="entry name" value="FAD/NAD-bd_sf"/>
</dbReference>
<dbReference type="InterPro" id="IPR011777">
    <property type="entry name" value="Geranylgeranyl_Rdtase_fam"/>
</dbReference>
<dbReference type="InterPro" id="IPR011774">
    <property type="entry name" value="Geranylgeranyl_Rdtase_pln/cyn"/>
</dbReference>
<dbReference type="InterPro" id="IPR050407">
    <property type="entry name" value="Geranylgeranyl_reductase"/>
</dbReference>
<dbReference type="NCBIfam" id="TIGR02023">
    <property type="entry name" value="BchP-ChlP"/>
    <property type="match status" value="1"/>
</dbReference>
<dbReference type="NCBIfam" id="TIGR02028">
    <property type="entry name" value="ChlP"/>
    <property type="match status" value="1"/>
</dbReference>
<dbReference type="NCBIfam" id="TIGR02032">
    <property type="entry name" value="GG-red-SF"/>
    <property type="match status" value="1"/>
</dbReference>
<dbReference type="PANTHER" id="PTHR42685">
    <property type="entry name" value="GERANYLGERANYL DIPHOSPHATE REDUCTASE"/>
    <property type="match status" value="1"/>
</dbReference>
<dbReference type="PANTHER" id="PTHR42685:SF4">
    <property type="entry name" value="GERANYLGERANYL DIPHOSPHATE REDUCTASE, CHLOROPLASTIC"/>
    <property type="match status" value="1"/>
</dbReference>
<dbReference type="Pfam" id="PF01494">
    <property type="entry name" value="FAD_binding_3"/>
    <property type="match status" value="1"/>
</dbReference>
<dbReference type="PRINTS" id="PR00420">
    <property type="entry name" value="RNGMNOXGNASE"/>
</dbReference>
<dbReference type="SUPFAM" id="SSF51905">
    <property type="entry name" value="FAD/NAD(P)-binding domain"/>
    <property type="match status" value="1"/>
</dbReference>
<evidence type="ECO:0000305" key="1"/>
<organism>
    <name type="scientific">Synechocystis sp. (strain ATCC 27184 / PCC 6803 / Kazusa)</name>
    <dbReference type="NCBI Taxonomy" id="1111708"/>
    <lineage>
        <taxon>Bacteria</taxon>
        <taxon>Bacillati</taxon>
        <taxon>Cyanobacteriota</taxon>
        <taxon>Cyanophyceae</taxon>
        <taxon>Synechococcales</taxon>
        <taxon>Merismopediaceae</taxon>
        <taxon>Synechocystis</taxon>
    </lineage>
</organism>
<protein>
    <recommendedName>
        <fullName>Geranylgeranyl diphosphate reductase</fullName>
        <ecNumber>1.3.1.83</ecNumber>
    </recommendedName>
    <alternativeName>
        <fullName>Geranylgeranyl reductase</fullName>
    </alternativeName>
</protein>
<sequence>MVLRVAVVGGGPAGSSAAEILVKAGIETYLFERKLDNAKPCGGAIPLCMVDEFDLPPEIIDRRVRKMKMISPSNIEVNIGQTLKDDEYIGMCRREVLDGFLRERAEKLGTKVINGTVYKLDIPSKDSDPYTLHYADHSVGGTTGEMKILKVDVVIGADGANSRIAKAIDAGDYNYAIAFQERIRLPEDKMAYYDELAEMYVGDDVSPDFYAWVFPKYDHVAVGTGTMKVNKARIKDLQAGIRTRAAKKLEGGEIIKVEAHPIPEHPRPRRVVGRVALVGDAAGTVTKSSGEGIYFAAKSARMCAETIVATSNNGQRVPTEADLKQYIKQWDKRYGATYLVLDILQRVFYRTDATREAFVEMCSDIDVQKLTFDSYLYKTVVPANPLVQMKITAKTIGSLLRGNALAP</sequence>
<reference key="1">
    <citation type="journal article" date="1996" name="FEBS Lett.">
        <title>Cloning, sequencing and functional assignment of the chlorophyll biosynthesis gene, chlP, of Synechocystis sp. PCC 6803.</title>
        <authorList>
            <person name="Addlesee H.A."/>
            <person name="Gibson L.C.D."/>
            <person name="Jensen P.E."/>
            <person name="Hunter C.N."/>
        </authorList>
    </citation>
    <scope>NUCLEOTIDE SEQUENCE [GENOMIC DNA]</scope>
</reference>
<reference key="2">
    <citation type="journal article" date="1996" name="DNA Res.">
        <title>Sequence analysis of the genome of the unicellular cyanobacterium Synechocystis sp. strain PCC6803. II. Sequence determination of the entire genome and assignment of potential protein-coding regions.</title>
        <authorList>
            <person name="Kaneko T."/>
            <person name="Sato S."/>
            <person name="Kotani H."/>
            <person name="Tanaka A."/>
            <person name="Asamizu E."/>
            <person name="Nakamura Y."/>
            <person name="Miyajima N."/>
            <person name="Hirosawa M."/>
            <person name="Sugiura M."/>
            <person name="Sasamoto S."/>
            <person name="Kimura T."/>
            <person name="Hosouchi T."/>
            <person name="Matsuno A."/>
            <person name="Muraki A."/>
            <person name="Nakazaki N."/>
            <person name="Naruo K."/>
            <person name="Okumura S."/>
            <person name="Shimpo S."/>
            <person name="Takeuchi C."/>
            <person name="Wada T."/>
            <person name="Watanabe A."/>
            <person name="Yamada M."/>
            <person name="Yasuda M."/>
            <person name="Tabata S."/>
        </authorList>
    </citation>
    <scope>NUCLEOTIDE SEQUENCE [LARGE SCALE GENOMIC DNA]</scope>
    <source>
        <strain>ATCC 27184 / PCC 6803 / Kazusa</strain>
    </source>
</reference>
<feature type="chain" id="PRO_0000219664" description="Geranylgeranyl diphosphate reductase">
    <location>
        <begin position="1"/>
        <end position="407"/>
    </location>
</feature>
<gene>
    <name type="primary">chlP</name>
    <name type="ordered locus">sll1091</name>
</gene>
<proteinExistence type="inferred from homology"/>
<comment type="function">
    <text>Catalyzes the stepwise hydrogenation of geranylgeraniol to phytol during chlorophyll A (ChlA) biosynthesis.</text>
</comment>
<comment type="catalytic activity">
    <reaction>
        <text>phytyl diphosphate + 3 NADP(+) = geranylgeranyl diphosphate + 3 NADPH + 3 H(+)</text>
        <dbReference type="Rhea" id="RHEA:26229"/>
        <dbReference type="ChEBI" id="CHEBI:15378"/>
        <dbReference type="ChEBI" id="CHEBI:57533"/>
        <dbReference type="ChEBI" id="CHEBI:57783"/>
        <dbReference type="ChEBI" id="CHEBI:58349"/>
        <dbReference type="ChEBI" id="CHEBI:75434"/>
        <dbReference type="EC" id="1.3.1.83"/>
    </reaction>
</comment>
<comment type="pathway">
    <text>Porphyrin-containing compound metabolism; chlorophyll biosynthesis.</text>
</comment>
<comment type="similarity">
    <text evidence="1">Belongs to the geranylgeranyl reductase family. ChlP subfamily.</text>
</comment>
<comment type="sequence caution" evidence="1">
    <conflict type="erroneous initiation">
        <sequence resource="EMBL-CDS" id="BAA18339"/>
    </conflict>
</comment>
<accession>Q55087</accession>
<accession>P74245</accession>
<name>CHLP_SYNY3</name>
<keyword id="KW-0149">Chlorophyll biosynthesis</keyword>
<keyword id="KW-0521">NADP</keyword>
<keyword id="KW-0560">Oxidoreductase</keyword>
<keyword id="KW-0602">Photosynthesis</keyword>
<keyword id="KW-1185">Reference proteome</keyword>